<keyword id="KW-0456">Lyase</keyword>
<keyword id="KW-0474">Menaquinone biosynthesis</keyword>
<keyword id="KW-1185">Reference proteome</keyword>
<protein>
    <recommendedName>
        <fullName evidence="1">2-succinyl-6-hydroxy-2,4-cyclohexadiene-1-carboxylate synthase</fullName>
        <shortName evidence="1">SHCHC synthase</shortName>
        <ecNumber evidence="1">4.2.99.20</ecNumber>
    </recommendedName>
</protein>
<feature type="chain" id="PRO_0000341912" description="2-succinyl-6-hydroxy-2,4-cyclohexadiene-1-carboxylate synthase">
    <location>
        <begin position="1"/>
        <end position="252"/>
    </location>
</feature>
<organism>
    <name type="scientific">Escherichia coli O6:H1 (strain CFT073 / ATCC 700928 / UPEC)</name>
    <dbReference type="NCBI Taxonomy" id="199310"/>
    <lineage>
        <taxon>Bacteria</taxon>
        <taxon>Pseudomonadati</taxon>
        <taxon>Pseudomonadota</taxon>
        <taxon>Gammaproteobacteria</taxon>
        <taxon>Enterobacterales</taxon>
        <taxon>Enterobacteriaceae</taxon>
        <taxon>Escherichia</taxon>
    </lineage>
</organism>
<dbReference type="EC" id="4.2.99.20" evidence="1"/>
<dbReference type="EMBL" id="AE014075">
    <property type="protein sequence ID" value="AAN81261.1"/>
    <property type="molecule type" value="Genomic_DNA"/>
</dbReference>
<dbReference type="RefSeq" id="WP_000600525.1">
    <property type="nucleotide sequence ID" value="NZ_CP051263.1"/>
</dbReference>
<dbReference type="SMR" id="Q8FFL2"/>
<dbReference type="STRING" id="199310.c2807"/>
<dbReference type="ESTHER" id="ecoli-YFBB">
    <property type="family name" value="MenH_SHCHC"/>
</dbReference>
<dbReference type="MEROPS" id="S33.996"/>
<dbReference type="KEGG" id="ecc:c2807"/>
<dbReference type="eggNOG" id="COG0596">
    <property type="taxonomic scope" value="Bacteria"/>
</dbReference>
<dbReference type="HOGENOM" id="CLU_020336_38_2_6"/>
<dbReference type="BioCyc" id="ECOL199310:C2807-MONOMER"/>
<dbReference type="UniPathway" id="UPA00079"/>
<dbReference type="UniPathway" id="UPA01057">
    <property type="reaction ID" value="UER00900"/>
</dbReference>
<dbReference type="Proteomes" id="UP000001410">
    <property type="component" value="Chromosome"/>
</dbReference>
<dbReference type="GO" id="GO:0070205">
    <property type="term" value="F:2-succinyl-6-hydroxy-2,4-cyclohexadiene-1-carboxylate synthase activity"/>
    <property type="evidence" value="ECO:0007669"/>
    <property type="project" value="UniProtKB-UniRule"/>
</dbReference>
<dbReference type="GO" id="GO:0009234">
    <property type="term" value="P:menaquinone biosynthetic process"/>
    <property type="evidence" value="ECO:0007669"/>
    <property type="project" value="UniProtKB-UniRule"/>
</dbReference>
<dbReference type="FunFam" id="3.40.50.1820:FF:000038">
    <property type="entry name" value="2-succinyl-6-hydroxy-2,4-cyclohexadiene-1-carboxylate synthase"/>
    <property type="match status" value="1"/>
</dbReference>
<dbReference type="Gene3D" id="3.40.50.1820">
    <property type="entry name" value="alpha/beta hydrolase"/>
    <property type="match status" value="1"/>
</dbReference>
<dbReference type="HAMAP" id="MF_01660">
    <property type="entry name" value="MenH"/>
    <property type="match status" value="1"/>
</dbReference>
<dbReference type="InterPro" id="IPR000073">
    <property type="entry name" value="AB_hydrolase_1"/>
</dbReference>
<dbReference type="InterPro" id="IPR029058">
    <property type="entry name" value="AB_hydrolase_fold"/>
</dbReference>
<dbReference type="InterPro" id="IPR022485">
    <property type="entry name" value="SHCHC_synthase_MenH"/>
</dbReference>
<dbReference type="NCBIfam" id="TIGR03695">
    <property type="entry name" value="menH_SHCHC"/>
    <property type="match status" value="1"/>
</dbReference>
<dbReference type="NCBIfam" id="NF008340">
    <property type="entry name" value="PRK11126.1"/>
    <property type="match status" value="1"/>
</dbReference>
<dbReference type="PANTHER" id="PTHR42916">
    <property type="entry name" value="2-SUCCINYL-5-ENOLPYRUVYL-6-HYDROXY-3-CYCLOHEXENE-1-CARBOXYLATE SYNTHASE"/>
    <property type="match status" value="1"/>
</dbReference>
<dbReference type="PANTHER" id="PTHR42916:SF1">
    <property type="entry name" value="PROTEIN PHYLLO, CHLOROPLASTIC"/>
    <property type="match status" value="1"/>
</dbReference>
<dbReference type="Pfam" id="PF12697">
    <property type="entry name" value="Abhydrolase_6"/>
    <property type="match status" value="1"/>
</dbReference>
<dbReference type="SUPFAM" id="SSF53474">
    <property type="entry name" value="alpha/beta-Hydrolases"/>
    <property type="match status" value="1"/>
</dbReference>
<comment type="function">
    <text evidence="1">Catalyzes a proton abstraction reaction that results in 2,5-elimination of pyruvate from 2-succinyl-5-enolpyruvyl-6-hydroxy-3-cyclohexene-1-carboxylate (SEPHCHC) and the formation of 2-succinyl-6-hydroxy-2,4-cyclohexadiene-1-carboxylate (SHCHC).</text>
</comment>
<comment type="catalytic activity">
    <reaction evidence="1">
        <text>5-enolpyruvoyl-6-hydroxy-2-succinyl-cyclohex-3-ene-1-carboxylate = (1R,6R)-6-hydroxy-2-succinyl-cyclohexa-2,4-diene-1-carboxylate + pyruvate</text>
        <dbReference type="Rhea" id="RHEA:25597"/>
        <dbReference type="ChEBI" id="CHEBI:15361"/>
        <dbReference type="ChEBI" id="CHEBI:58689"/>
        <dbReference type="ChEBI" id="CHEBI:58818"/>
        <dbReference type="EC" id="4.2.99.20"/>
    </reaction>
</comment>
<comment type="pathway">
    <text evidence="1">Quinol/quinone metabolism; 1,4-dihydroxy-2-naphthoate biosynthesis; 1,4-dihydroxy-2-naphthoate from chorismate: step 3/7.</text>
</comment>
<comment type="pathway">
    <text evidence="1">Quinol/quinone metabolism; menaquinone biosynthesis.</text>
</comment>
<comment type="subunit">
    <text evidence="1">Monomer.</text>
</comment>
<comment type="similarity">
    <text evidence="1">Belongs to the AB hydrolase superfamily. MenH family.</text>
</comment>
<name>MENH_ECOL6</name>
<evidence type="ECO:0000255" key="1">
    <source>
        <dbReference type="HAMAP-Rule" id="MF_01660"/>
    </source>
</evidence>
<gene>
    <name evidence="1" type="primary">menH</name>
    <name type="ordered locus">c2807</name>
</gene>
<proteinExistence type="inferred from homology"/>
<sequence>MILHAQAKHGKPGLPWLVFLHGFSGDCHEWQEVGEAFADYSRLYVDLPGHGGSATISVDGFDDVTGLLCKTLVSYNILNFWLVGYSLGGRVAMMAACQELAGLCGVVVEGGHPGLQNAEQRAERQRSDRQWAQRFRTEPLTAVFADWYQQPVFASLNDDQRRELVALRSNNNGATLAAMLEATSLAVQPDLRANLSARTFAFYYLCGERDSKFRALAAELAADCHVIPRAGHNAHRENPAGVIASLAQILRF</sequence>
<accession>Q8FFL2</accession>
<reference key="1">
    <citation type="journal article" date="2002" name="Proc. Natl. Acad. Sci. U.S.A.">
        <title>Extensive mosaic structure revealed by the complete genome sequence of uropathogenic Escherichia coli.</title>
        <authorList>
            <person name="Welch R.A."/>
            <person name="Burland V."/>
            <person name="Plunkett G. III"/>
            <person name="Redford P."/>
            <person name="Roesch P."/>
            <person name="Rasko D."/>
            <person name="Buckles E.L."/>
            <person name="Liou S.-R."/>
            <person name="Boutin A."/>
            <person name="Hackett J."/>
            <person name="Stroud D."/>
            <person name="Mayhew G.F."/>
            <person name="Rose D.J."/>
            <person name="Zhou S."/>
            <person name="Schwartz D.C."/>
            <person name="Perna N.T."/>
            <person name="Mobley H.L.T."/>
            <person name="Donnenberg M.S."/>
            <person name="Blattner F.R."/>
        </authorList>
    </citation>
    <scope>NUCLEOTIDE SEQUENCE [LARGE SCALE GENOMIC DNA]</scope>
    <source>
        <strain>CFT073 / ATCC 700928 / UPEC</strain>
    </source>
</reference>